<evidence type="ECO:0000255" key="1">
    <source>
        <dbReference type="HAMAP-Rule" id="MF_01005"/>
    </source>
</evidence>
<name>BTUD_SHIB3</name>
<keyword id="KW-0067">ATP-binding</keyword>
<keyword id="KW-0997">Cell inner membrane</keyword>
<keyword id="KW-1003">Cell membrane</keyword>
<keyword id="KW-0472">Membrane</keyword>
<keyword id="KW-0547">Nucleotide-binding</keyword>
<keyword id="KW-1185">Reference proteome</keyword>
<keyword id="KW-1278">Translocase</keyword>
<keyword id="KW-0813">Transport</keyword>
<accession>B2U358</accession>
<feature type="chain" id="PRO_1000134670" description="Vitamin B12 import ATP-binding protein BtuD">
    <location>
        <begin position="1"/>
        <end position="249"/>
    </location>
</feature>
<feature type="domain" description="ABC transporter" evidence="1">
    <location>
        <begin position="1"/>
        <end position="233"/>
    </location>
</feature>
<feature type="binding site" evidence="1">
    <location>
        <begin position="33"/>
        <end position="40"/>
    </location>
    <ligand>
        <name>ATP</name>
        <dbReference type="ChEBI" id="CHEBI:30616"/>
    </ligand>
</feature>
<organism>
    <name type="scientific">Shigella boydii serotype 18 (strain CDC 3083-94 / BS512)</name>
    <dbReference type="NCBI Taxonomy" id="344609"/>
    <lineage>
        <taxon>Bacteria</taxon>
        <taxon>Pseudomonadati</taxon>
        <taxon>Pseudomonadota</taxon>
        <taxon>Gammaproteobacteria</taxon>
        <taxon>Enterobacterales</taxon>
        <taxon>Enterobacteriaceae</taxon>
        <taxon>Shigella</taxon>
    </lineage>
</organism>
<gene>
    <name evidence="1" type="primary">btuD</name>
    <name type="ordered locus">SbBS512_E1913</name>
</gene>
<dbReference type="EC" id="7.6.2.8" evidence="1"/>
<dbReference type="EMBL" id="CP001063">
    <property type="protein sequence ID" value="ACD06891.1"/>
    <property type="molecule type" value="Genomic_DNA"/>
</dbReference>
<dbReference type="RefSeq" id="WP_000029465.1">
    <property type="nucleotide sequence ID" value="NC_010658.1"/>
</dbReference>
<dbReference type="SMR" id="B2U358"/>
<dbReference type="STRING" id="344609.SbBS512_E1913"/>
<dbReference type="KEGG" id="sbc:SbBS512_E1913"/>
<dbReference type="HOGENOM" id="CLU_000604_1_11_6"/>
<dbReference type="Proteomes" id="UP000001030">
    <property type="component" value="Chromosome"/>
</dbReference>
<dbReference type="GO" id="GO:0005886">
    <property type="term" value="C:plasma membrane"/>
    <property type="evidence" value="ECO:0007669"/>
    <property type="project" value="UniProtKB-SubCell"/>
</dbReference>
<dbReference type="GO" id="GO:0015420">
    <property type="term" value="F:ABC-type vitamin B12 transporter activity"/>
    <property type="evidence" value="ECO:0007669"/>
    <property type="project" value="UniProtKB-UniRule"/>
</dbReference>
<dbReference type="GO" id="GO:0005524">
    <property type="term" value="F:ATP binding"/>
    <property type="evidence" value="ECO:0007669"/>
    <property type="project" value="UniProtKB-KW"/>
</dbReference>
<dbReference type="GO" id="GO:0016887">
    <property type="term" value="F:ATP hydrolysis activity"/>
    <property type="evidence" value="ECO:0007669"/>
    <property type="project" value="InterPro"/>
</dbReference>
<dbReference type="CDD" id="cd03214">
    <property type="entry name" value="ABC_Iron-Siderophores_B12_Hemin"/>
    <property type="match status" value="1"/>
</dbReference>
<dbReference type="FunFam" id="3.40.50.300:FF:000462">
    <property type="entry name" value="Vitamin B12 import ATP-binding protein BtuD"/>
    <property type="match status" value="1"/>
</dbReference>
<dbReference type="Gene3D" id="3.40.50.300">
    <property type="entry name" value="P-loop containing nucleotide triphosphate hydrolases"/>
    <property type="match status" value="1"/>
</dbReference>
<dbReference type="HAMAP" id="MF_01005">
    <property type="entry name" value="BtuD"/>
    <property type="match status" value="1"/>
</dbReference>
<dbReference type="InterPro" id="IPR003593">
    <property type="entry name" value="AAA+_ATPase"/>
</dbReference>
<dbReference type="InterPro" id="IPR003439">
    <property type="entry name" value="ABC_transporter-like_ATP-bd"/>
</dbReference>
<dbReference type="InterPro" id="IPR017871">
    <property type="entry name" value="ABC_transporter-like_CS"/>
</dbReference>
<dbReference type="InterPro" id="IPR023693">
    <property type="entry name" value="ABC_transptr_BtuD"/>
</dbReference>
<dbReference type="InterPro" id="IPR050153">
    <property type="entry name" value="Metal_Ion_Import_ABC"/>
</dbReference>
<dbReference type="InterPro" id="IPR027417">
    <property type="entry name" value="P-loop_NTPase"/>
</dbReference>
<dbReference type="NCBIfam" id="NF002981">
    <property type="entry name" value="PRK03695.1"/>
    <property type="match status" value="1"/>
</dbReference>
<dbReference type="PANTHER" id="PTHR42734">
    <property type="entry name" value="METAL TRANSPORT SYSTEM ATP-BINDING PROTEIN TM_0124-RELATED"/>
    <property type="match status" value="1"/>
</dbReference>
<dbReference type="PANTHER" id="PTHR42734:SF18">
    <property type="entry name" value="VITAMIN B12 IMPORT ATP-BINDING PROTEIN BTUD"/>
    <property type="match status" value="1"/>
</dbReference>
<dbReference type="Pfam" id="PF00005">
    <property type="entry name" value="ABC_tran"/>
    <property type="match status" value="1"/>
</dbReference>
<dbReference type="SMART" id="SM00382">
    <property type="entry name" value="AAA"/>
    <property type="match status" value="1"/>
</dbReference>
<dbReference type="SUPFAM" id="SSF52540">
    <property type="entry name" value="P-loop containing nucleoside triphosphate hydrolases"/>
    <property type="match status" value="1"/>
</dbReference>
<dbReference type="PROSITE" id="PS00211">
    <property type="entry name" value="ABC_TRANSPORTER_1"/>
    <property type="match status" value="1"/>
</dbReference>
<dbReference type="PROSITE" id="PS50893">
    <property type="entry name" value="ABC_TRANSPORTER_2"/>
    <property type="match status" value="1"/>
</dbReference>
<reference key="1">
    <citation type="submission" date="2008-05" db="EMBL/GenBank/DDBJ databases">
        <title>Complete sequence of Shigella boydii serotype 18 strain BS512.</title>
        <authorList>
            <person name="Rasko D.A."/>
            <person name="Rosovitz M."/>
            <person name="Maurelli A.T."/>
            <person name="Myers G."/>
            <person name="Seshadri R."/>
            <person name="Cer R."/>
            <person name="Jiang L."/>
            <person name="Ravel J."/>
            <person name="Sebastian Y."/>
        </authorList>
    </citation>
    <scope>NUCLEOTIDE SEQUENCE [LARGE SCALE GENOMIC DNA]</scope>
    <source>
        <strain>CDC 3083-94 / BS512</strain>
    </source>
</reference>
<protein>
    <recommendedName>
        <fullName evidence="1">Vitamin B12 import ATP-binding protein BtuD</fullName>
        <ecNumber evidence="1">7.6.2.8</ecNumber>
    </recommendedName>
    <alternativeName>
        <fullName evidence="1">Vitamin B12-transporting ATPase</fullName>
    </alternativeName>
</protein>
<proteinExistence type="inferred from homology"/>
<sequence>MSIVMQLQDVAESTRLGPLSGEVRAGEILHLVGPNGAGKSTLLARMAGMTSGKGSIQFAGQPLEAWSATKLALHRAYLSQQQTPPFAMPVWHYLTLHQHDKTRTELLNDVAGALALDDKLGRSTNQLSGGEWQRVRLAAVVLQITPQANPAGQLLLLDEPMNSLDVAQQSALDKILSALCQQGLAIVMSSHDLNHTLRHAHRAWLLKGGKMLASGRREEVLTPPNLAQAYGMNFRRLDIEGHRMLILTI</sequence>
<comment type="function">
    <text evidence="1">Part of the ABC transporter complex BtuCDF involved in vitamin B12 import. Responsible for energy coupling to the transport system.</text>
</comment>
<comment type="catalytic activity">
    <reaction evidence="1">
        <text>an R-cob(III)alamin(out) + ATP + H2O = an R-cob(III)alamin(in) + ADP + phosphate + H(+)</text>
        <dbReference type="Rhea" id="RHEA:17873"/>
        <dbReference type="ChEBI" id="CHEBI:15377"/>
        <dbReference type="ChEBI" id="CHEBI:15378"/>
        <dbReference type="ChEBI" id="CHEBI:30616"/>
        <dbReference type="ChEBI" id="CHEBI:43474"/>
        <dbReference type="ChEBI" id="CHEBI:140785"/>
        <dbReference type="ChEBI" id="CHEBI:456216"/>
        <dbReference type="EC" id="7.6.2.8"/>
    </reaction>
</comment>
<comment type="subunit">
    <text evidence="1">The complex is composed of two ATP-binding proteins (BtuD), two transmembrane proteins (BtuC) and a solute-binding protein (BtuF).</text>
</comment>
<comment type="subcellular location">
    <subcellularLocation>
        <location evidence="1">Cell inner membrane</location>
        <topology evidence="1">Peripheral membrane protein</topology>
    </subcellularLocation>
</comment>
<comment type="similarity">
    <text evidence="1">Belongs to the ABC transporter superfamily. Vitamin B12 importer (TC 3.A.1.13.1) family.</text>
</comment>